<feature type="chain" id="PRO_1000014886" description="Large ribosomal subunit protein bL9">
    <location>
        <begin position="1"/>
        <end position="150"/>
    </location>
</feature>
<protein>
    <recommendedName>
        <fullName evidence="1">Large ribosomal subunit protein bL9</fullName>
    </recommendedName>
    <alternativeName>
        <fullName evidence="2">50S ribosomal protein L9</fullName>
    </alternativeName>
</protein>
<sequence length="150" mass="15861">MQVILLDKVANLGSLGDQVNVKAGYARNFLVPQGKAVPATKKNVEFFEARRAELEAKLADVLAAAEARATKINELVSVTISSKAGDEGKLFGSIGTRDIADAVTAAGVEVAKSEVRLPNGVLRTAGEHEVHFQVHSDVFAKLNVVVVPEA</sequence>
<organism>
    <name type="scientific">Yersinia pestis (strain Pestoides F)</name>
    <dbReference type="NCBI Taxonomy" id="386656"/>
    <lineage>
        <taxon>Bacteria</taxon>
        <taxon>Pseudomonadati</taxon>
        <taxon>Pseudomonadota</taxon>
        <taxon>Gammaproteobacteria</taxon>
        <taxon>Enterobacterales</taxon>
        <taxon>Yersiniaceae</taxon>
        <taxon>Yersinia</taxon>
    </lineage>
</organism>
<comment type="function">
    <text evidence="1">Binds to the 23S rRNA.</text>
</comment>
<comment type="similarity">
    <text evidence="1">Belongs to the bacterial ribosomal protein bL9 family.</text>
</comment>
<gene>
    <name evidence="1" type="primary">rplI</name>
    <name type="ordered locus">YPDSF_3585</name>
</gene>
<name>RL9_YERPP</name>
<dbReference type="EMBL" id="CP000668">
    <property type="protein sequence ID" value="ABP41935.1"/>
    <property type="molecule type" value="Genomic_DNA"/>
</dbReference>
<dbReference type="RefSeq" id="WP_002210156.1">
    <property type="nucleotide sequence ID" value="NZ_CP009715.1"/>
</dbReference>
<dbReference type="SMR" id="A4TRM3"/>
<dbReference type="GeneID" id="57975178"/>
<dbReference type="KEGG" id="ypp:YPDSF_3585"/>
<dbReference type="PATRIC" id="fig|386656.14.peg.243"/>
<dbReference type="GO" id="GO:1990904">
    <property type="term" value="C:ribonucleoprotein complex"/>
    <property type="evidence" value="ECO:0007669"/>
    <property type="project" value="UniProtKB-KW"/>
</dbReference>
<dbReference type="GO" id="GO:0005840">
    <property type="term" value="C:ribosome"/>
    <property type="evidence" value="ECO:0007669"/>
    <property type="project" value="UniProtKB-KW"/>
</dbReference>
<dbReference type="GO" id="GO:0019843">
    <property type="term" value="F:rRNA binding"/>
    <property type="evidence" value="ECO:0007669"/>
    <property type="project" value="UniProtKB-UniRule"/>
</dbReference>
<dbReference type="GO" id="GO:0003735">
    <property type="term" value="F:structural constituent of ribosome"/>
    <property type="evidence" value="ECO:0007669"/>
    <property type="project" value="InterPro"/>
</dbReference>
<dbReference type="GO" id="GO:0006412">
    <property type="term" value="P:translation"/>
    <property type="evidence" value="ECO:0007669"/>
    <property type="project" value="UniProtKB-UniRule"/>
</dbReference>
<dbReference type="FunFam" id="3.10.430.100:FF:000001">
    <property type="entry name" value="50S ribosomal protein L9"/>
    <property type="match status" value="1"/>
</dbReference>
<dbReference type="FunFam" id="3.40.5.10:FF:000001">
    <property type="entry name" value="50S ribosomal protein L9"/>
    <property type="match status" value="1"/>
</dbReference>
<dbReference type="Gene3D" id="3.10.430.100">
    <property type="entry name" value="Ribosomal protein L9, C-terminal domain"/>
    <property type="match status" value="1"/>
</dbReference>
<dbReference type="Gene3D" id="3.40.5.10">
    <property type="entry name" value="Ribosomal protein L9, N-terminal domain"/>
    <property type="match status" value="1"/>
</dbReference>
<dbReference type="HAMAP" id="MF_00503">
    <property type="entry name" value="Ribosomal_bL9"/>
    <property type="match status" value="1"/>
</dbReference>
<dbReference type="InterPro" id="IPR000244">
    <property type="entry name" value="Ribosomal_bL9"/>
</dbReference>
<dbReference type="InterPro" id="IPR009027">
    <property type="entry name" value="Ribosomal_bL9/RNase_H1_N"/>
</dbReference>
<dbReference type="InterPro" id="IPR020594">
    <property type="entry name" value="Ribosomal_bL9_bac/chp"/>
</dbReference>
<dbReference type="InterPro" id="IPR020069">
    <property type="entry name" value="Ribosomal_bL9_C"/>
</dbReference>
<dbReference type="InterPro" id="IPR036791">
    <property type="entry name" value="Ribosomal_bL9_C_sf"/>
</dbReference>
<dbReference type="InterPro" id="IPR020070">
    <property type="entry name" value="Ribosomal_bL9_N"/>
</dbReference>
<dbReference type="InterPro" id="IPR036935">
    <property type="entry name" value="Ribosomal_bL9_N_sf"/>
</dbReference>
<dbReference type="NCBIfam" id="TIGR00158">
    <property type="entry name" value="L9"/>
    <property type="match status" value="1"/>
</dbReference>
<dbReference type="PANTHER" id="PTHR21368">
    <property type="entry name" value="50S RIBOSOMAL PROTEIN L9"/>
    <property type="match status" value="1"/>
</dbReference>
<dbReference type="Pfam" id="PF03948">
    <property type="entry name" value="Ribosomal_L9_C"/>
    <property type="match status" value="1"/>
</dbReference>
<dbReference type="Pfam" id="PF01281">
    <property type="entry name" value="Ribosomal_L9_N"/>
    <property type="match status" value="1"/>
</dbReference>
<dbReference type="SUPFAM" id="SSF55658">
    <property type="entry name" value="L9 N-domain-like"/>
    <property type="match status" value="1"/>
</dbReference>
<dbReference type="SUPFAM" id="SSF55653">
    <property type="entry name" value="Ribosomal protein L9 C-domain"/>
    <property type="match status" value="1"/>
</dbReference>
<dbReference type="PROSITE" id="PS00651">
    <property type="entry name" value="RIBOSOMAL_L9"/>
    <property type="match status" value="1"/>
</dbReference>
<keyword id="KW-0687">Ribonucleoprotein</keyword>
<keyword id="KW-0689">Ribosomal protein</keyword>
<keyword id="KW-0694">RNA-binding</keyword>
<keyword id="KW-0699">rRNA-binding</keyword>
<evidence type="ECO:0000255" key="1">
    <source>
        <dbReference type="HAMAP-Rule" id="MF_00503"/>
    </source>
</evidence>
<evidence type="ECO:0000305" key="2"/>
<accession>A4TRM3</accession>
<proteinExistence type="inferred from homology"/>
<reference key="1">
    <citation type="submission" date="2007-02" db="EMBL/GenBank/DDBJ databases">
        <title>Complete sequence of chromosome of Yersinia pestis Pestoides F.</title>
        <authorList>
            <consortium name="US DOE Joint Genome Institute"/>
            <person name="Copeland A."/>
            <person name="Lucas S."/>
            <person name="Lapidus A."/>
            <person name="Barry K."/>
            <person name="Detter J.C."/>
            <person name="Glavina del Rio T."/>
            <person name="Hammon N."/>
            <person name="Israni S."/>
            <person name="Dalin E."/>
            <person name="Tice H."/>
            <person name="Pitluck S."/>
            <person name="Di Bartolo G."/>
            <person name="Chain P."/>
            <person name="Malfatti S."/>
            <person name="Shin M."/>
            <person name="Vergez L."/>
            <person name="Schmutz J."/>
            <person name="Larimer F."/>
            <person name="Land M."/>
            <person name="Hauser L."/>
            <person name="Worsham P."/>
            <person name="Chu M."/>
            <person name="Bearden S."/>
            <person name="Garcia E."/>
            <person name="Richardson P."/>
        </authorList>
    </citation>
    <scope>NUCLEOTIDE SEQUENCE [LARGE SCALE GENOMIC DNA]</scope>
    <source>
        <strain>Pestoides F</strain>
    </source>
</reference>